<reference key="1">
    <citation type="journal article" date="2012" name="Environ. Microbiol.">
        <title>The genome sequence of Desulfatibacillum alkenivorans AK-01: a blueprint for anaerobic alkane oxidation.</title>
        <authorList>
            <person name="Callaghan A.V."/>
            <person name="Morris B.E."/>
            <person name="Pereira I.A."/>
            <person name="McInerney M.J."/>
            <person name="Austin R.N."/>
            <person name="Groves J.T."/>
            <person name="Kukor J.J."/>
            <person name="Suflita J.M."/>
            <person name="Young L.Y."/>
            <person name="Zylstra G.J."/>
            <person name="Wawrik B."/>
        </authorList>
    </citation>
    <scope>NUCLEOTIDE SEQUENCE [LARGE SCALE GENOMIC DNA]</scope>
    <source>
        <strain>AK-01</strain>
    </source>
</reference>
<dbReference type="EMBL" id="CP001322">
    <property type="protein sequence ID" value="ACL02621.1"/>
    <property type="molecule type" value="Genomic_DNA"/>
</dbReference>
<dbReference type="RefSeq" id="WP_012610059.1">
    <property type="nucleotide sequence ID" value="NC_011768.1"/>
</dbReference>
<dbReference type="SMR" id="B8FI54"/>
<dbReference type="KEGG" id="dal:Dalk_0916"/>
<dbReference type="eggNOG" id="COG0359">
    <property type="taxonomic scope" value="Bacteria"/>
</dbReference>
<dbReference type="HOGENOM" id="CLU_078938_3_0_7"/>
<dbReference type="Proteomes" id="UP000000739">
    <property type="component" value="Chromosome"/>
</dbReference>
<dbReference type="GO" id="GO:1990904">
    <property type="term" value="C:ribonucleoprotein complex"/>
    <property type="evidence" value="ECO:0007669"/>
    <property type="project" value="UniProtKB-KW"/>
</dbReference>
<dbReference type="GO" id="GO:0005840">
    <property type="term" value="C:ribosome"/>
    <property type="evidence" value="ECO:0007669"/>
    <property type="project" value="UniProtKB-KW"/>
</dbReference>
<dbReference type="GO" id="GO:0019843">
    <property type="term" value="F:rRNA binding"/>
    <property type="evidence" value="ECO:0007669"/>
    <property type="project" value="UniProtKB-UniRule"/>
</dbReference>
<dbReference type="GO" id="GO:0003735">
    <property type="term" value="F:structural constituent of ribosome"/>
    <property type="evidence" value="ECO:0007669"/>
    <property type="project" value="InterPro"/>
</dbReference>
<dbReference type="GO" id="GO:0006412">
    <property type="term" value="P:translation"/>
    <property type="evidence" value="ECO:0007669"/>
    <property type="project" value="UniProtKB-UniRule"/>
</dbReference>
<dbReference type="Gene3D" id="3.10.430.100">
    <property type="entry name" value="Ribosomal protein L9, C-terminal domain"/>
    <property type="match status" value="1"/>
</dbReference>
<dbReference type="Gene3D" id="3.40.5.10">
    <property type="entry name" value="Ribosomal protein L9, N-terminal domain"/>
    <property type="match status" value="1"/>
</dbReference>
<dbReference type="HAMAP" id="MF_00503">
    <property type="entry name" value="Ribosomal_bL9"/>
    <property type="match status" value="1"/>
</dbReference>
<dbReference type="InterPro" id="IPR000244">
    <property type="entry name" value="Ribosomal_bL9"/>
</dbReference>
<dbReference type="InterPro" id="IPR009027">
    <property type="entry name" value="Ribosomal_bL9/RNase_H1_N"/>
</dbReference>
<dbReference type="InterPro" id="IPR020594">
    <property type="entry name" value="Ribosomal_bL9_bac/chp"/>
</dbReference>
<dbReference type="InterPro" id="IPR020069">
    <property type="entry name" value="Ribosomal_bL9_C"/>
</dbReference>
<dbReference type="InterPro" id="IPR036791">
    <property type="entry name" value="Ribosomal_bL9_C_sf"/>
</dbReference>
<dbReference type="InterPro" id="IPR020070">
    <property type="entry name" value="Ribosomal_bL9_N"/>
</dbReference>
<dbReference type="InterPro" id="IPR036935">
    <property type="entry name" value="Ribosomal_bL9_N_sf"/>
</dbReference>
<dbReference type="NCBIfam" id="TIGR00158">
    <property type="entry name" value="L9"/>
    <property type="match status" value="1"/>
</dbReference>
<dbReference type="PANTHER" id="PTHR21368">
    <property type="entry name" value="50S RIBOSOMAL PROTEIN L9"/>
    <property type="match status" value="1"/>
</dbReference>
<dbReference type="Pfam" id="PF03948">
    <property type="entry name" value="Ribosomal_L9_C"/>
    <property type="match status" value="1"/>
</dbReference>
<dbReference type="Pfam" id="PF01281">
    <property type="entry name" value="Ribosomal_L9_N"/>
    <property type="match status" value="1"/>
</dbReference>
<dbReference type="SUPFAM" id="SSF55658">
    <property type="entry name" value="L9 N-domain-like"/>
    <property type="match status" value="1"/>
</dbReference>
<dbReference type="SUPFAM" id="SSF55653">
    <property type="entry name" value="Ribosomal protein L9 C-domain"/>
    <property type="match status" value="1"/>
</dbReference>
<dbReference type="PROSITE" id="PS00651">
    <property type="entry name" value="RIBOSOMAL_L9"/>
    <property type="match status" value="1"/>
</dbReference>
<evidence type="ECO:0000255" key="1">
    <source>
        <dbReference type="HAMAP-Rule" id="MF_00503"/>
    </source>
</evidence>
<evidence type="ECO:0000305" key="2"/>
<proteinExistence type="inferred from homology"/>
<comment type="function">
    <text evidence="1">Binds to the 23S rRNA.</text>
</comment>
<comment type="similarity">
    <text evidence="1">Belongs to the bacterial ribosomal protein bL9 family.</text>
</comment>
<sequence>MKVILTENIDSLGLIGSEVAVADGYARNYLLPKKKAVLATEANRKVVELKRVKWEAKIAKEKALAEEMAKRIEGVKVTLKAKVSEEDRLYGSIKVKDIQDALAEKGVEVEKSMILLAESIKTLGTFEVPVRVFAGVKPEIIVEVVPED</sequence>
<keyword id="KW-1185">Reference proteome</keyword>
<keyword id="KW-0687">Ribonucleoprotein</keyword>
<keyword id="KW-0689">Ribosomal protein</keyword>
<keyword id="KW-0694">RNA-binding</keyword>
<keyword id="KW-0699">rRNA-binding</keyword>
<organism>
    <name type="scientific">Desulfatibacillum aliphaticivorans</name>
    <dbReference type="NCBI Taxonomy" id="218208"/>
    <lineage>
        <taxon>Bacteria</taxon>
        <taxon>Pseudomonadati</taxon>
        <taxon>Thermodesulfobacteriota</taxon>
        <taxon>Desulfobacteria</taxon>
        <taxon>Desulfobacterales</taxon>
        <taxon>Desulfatibacillaceae</taxon>
        <taxon>Desulfatibacillum</taxon>
    </lineage>
</organism>
<accession>B8FI54</accession>
<feature type="chain" id="PRO_1000126900" description="Large ribosomal subunit protein bL9">
    <location>
        <begin position="1"/>
        <end position="148"/>
    </location>
</feature>
<protein>
    <recommendedName>
        <fullName evidence="1">Large ribosomal subunit protein bL9</fullName>
    </recommendedName>
    <alternativeName>
        <fullName evidence="2">50S ribosomal protein L9</fullName>
    </alternativeName>
</protein>
<gene>
    <name evidence="1" type="primary">rplI</name>
    <name type="ordered locus">Dalk_0916</name>
</gene>
<name>RL9_DESAL</name>